<organism>
    <name type="scientific">Haemophilus influenzae (strain 86-028NP)</name>
    <dbReference type="NCBI Taxonomy" id="281310"/>
    <lineage>
        <taxon>Bacteria</taxon>
        <taxon>Pseudomonadati</taxon>
        <taxon>Pseudomonadota</taxon>
        <taxon>Gammaproteobacteria</taxon>
        <taxon>Pasteurellales</taxon>
        <taxon>Pasteurellaceae</taxon>
        <taxon>Haemophilus</taxon>
    </lineage>
</organism>
<feature type="chain" id="PRO_0000264044" description="Peptidyl-tRNA hydrolase">
    <location>
        <begin position="1"/>
        <end position="194"/>
    </location>
</feature>
<feature type="active site" description="Proton acceptor" evidence="1">
    <location>
        <position position="22"/>
    </location>
</feature>
<feature type="binding site" evidence="1">
    <location>
        <position position="17"/>
    </location>
    <ligand>
        <name>tRNA</name>
        <dbReference type="ChEBI" id="CHEBI:17843"/>
    </ligand>
</feature>
<feature type="binding site" evidence="1">
    <location>
        <position position="68"/>
    </location>
    <ligand>
        <name>tRNA</name>
        <dbReference type="ChEBI" id="CHEBI:17843"/>
    </ligand>
</feature>
<feature type="binding site" evidence="1">
    <location>
        <position position="70"/>
    </location>
    <ligand>
        <name>tRNA</name>
        <dbReference type="ChEBI" id="CHEBI:17843"/>
    </ligand>
</feature>
<feature type="binding site" evidence="1">
    <location>
        <position position="116"/>
    </location>
    <ligand>
        <name>tRNA</name>
        <dbReference type="ChEBI" id="CHEBI:17843"/>
    </ligand>
</feature>
<feature type="site" description="Discriminates between blocked and unblocked aminoacyl-tRNA" evidence="1">
    <location>
        <position position="12"/>
    </location>
</feature>
<feature type="site" description="Stabilizes the basic form of H active site to accept a proton" evidence="1">
    <location>
        <position position="95"/>
    </location>
</feature>
<accession>Q4QNE8</accession>
<gene>
    <name evidence="1" type="primary">pth</name>
    <name type="ordered locus">NTHI0514</name>
</gene>
<name>PTH_HAEI8</name>
<dbReference type="EC" id="3.1.1.29" evidence="1"/>
<dbReference type="EMBL" id="CP000057">
    <property type="protein sequence ID" value="AAX87449.1"/>
    <property type="molecule type" value="Genomic_DNA"/>
</dbReference>
<dbReference type="RefSeq" id="WP_011272022.1">
    <property type="nucleotide sequence ID" value="NC_007146.2"/>
</dbReference>
<dbReference type="SMR" id="Q4QNE8"/>
<dbReference type="KEGG" id="hit:NTHI0514"/>
<dbReference type="HOGENOM" id="CLU_062456_3_1_6"/>
<dbReference type="Proteomes" id="UP000002525">
    <property type="component" value="Chromosome"/>
</dbReference>
<dbReference type="GO" id="GO:0005737">
    <property type="term" value="C:cytoplasm"/>
    <property type="evidence" value="ECO:0007669"/>
    <property type="project" value="UniProtKB-SubCell"/>
</dbReference>
<dbReference type="GO" id="GO:0004045">
    <property type="term" value="F:peptidyl-tRNA hydrolase activity"/>
    <property type="evidence" value="ECO:0007669"/>
    <property type="project" value="UniProtKB-UniRule"/>
</dbReference>
<dbReference type="GO" id="GO:0000049">
    <property type="term" value="F:tRNA binding"/>
    <property type="evidence" value="ECO:0007669"/>
    <property type="project" value="UniProtKB-UniRule"/>
</dbReference>
<dbReference type="GO" id="GO:0006515">
    <property type="term" value="P:protein quality control for misfolded or incompletely synthesized proteins"/>
    <property type="evidence" value="ECO:0007669"/>
    <property type="project" value="UniProtKB-UniRule"/>
</dbReference>
<dbReference type="GO" id="GO:0072344">
    <property type="term" value="P:rescue of stalled ribosome"/>
    <property type="evidence" value="ECO:0007669"/>
    <property type="project" value="UniProtKB-UniRule"/>
</dbReference>
<dbReference type="CDD" id="cd00462">
    <property type="entry name" value="PTH"/>
    <property type="match status" value="1"/>
</dbReference>
<dbReference type="FunFam" id="3.40.50.1470:FF:000001">
    <property type="entry name" value="Peptidyl-tRNA hydrolase"/>
    <property type="match status" value="1"/>
</dbReference>
<dbReference type="Gene3D" id="3.40.50.1470">
    <property type="entry name" value="Peptidyl-tRNA hydrolase"/>
    <property type="match status" value="1"/>
</dbReference>
<dbReference type="HAMAP" id="MF_00083">
    <property type="entry name" value="Pept_tRNA_hydro_bact"/>
    <property type="match status" value="1"/>
</dbReference>
<dbReference type="InterPro" id="IPR001328">
    <property type="entry name" value="Pept_tRNA_hydro"/>
</dbReference>
<dbReference type="InterPro" id="IPR018171">
    <property type="entry name" value="Pept_tRNA_hydro_CS"/>
</dbReference>
<dbReference type="InterPro" id="IPR036416">
    <property type="entry name" value="Pept_tRNA_hydro_sf"/>
</dbReference>
<dbReference type="NCBIfam" id="TIGR00447">
    <property type="entry name" value="pth"/>
    <property type="match status" value="1"/>
</dbReference>
<dbReference type="PANTHER" id="PTHR17224">
    <property type="entry name" value="PEPTIDYL-TRNA HYDROLASE"/>
    <property type="match status" value="1"/>
</dbReference>
<dbReference type="PANTHER" id="PTHR17224:SF1">
    <property type="entry name" value="PEPTIDYL-TRNA HYDROLASE"/>
    <property type="match status" value="1"/>
</dbReference>
<dbReference type="Pfam" id="PF01195">
    <property type="entry name" value="Pept_tRNA_hydro"/>
    <property type="match status" value="1"/>
</dbReference>
<dbReference type="SUPFAM" id="SSF53178">
    <property type="entry name" value="Peptidyl-tRNA hydrolase-like"/>
    <property type="match status" value="1"/>
</dbReference>
<dbReference type="PROSITE" id="PS01195">
    <property type="entry name" value="PEPT_TRNA_HYDROL_1"/>
    <property type="match status" value="1"/>
</dbReference>
<dbReference type="PROSITE" id="PS01196">
    <property type="entry name" value="PEPT_TRNA_HYDROL_2"/>
    <property type="match status" value="1"/>
</dbReference>
<keyword id="KW-0963">Cytoplasm</keyword>
<keyword id="KW-0378">Hydrolase</keyword>
<keyword id="KW-0694">RNA-binding</keyword>
<keyword id="KW-0820">tRNA-binding</keyword>
<comment type="function">
    <text evidence="1">Hydrolyzes ribosome-free peptidyl-tRNAs (with 1 or more amino acids incorporated), which drop off the ribosome during protein synthesis, or as a result of ribosome stalling.</text>
</comment>
<comment type="function">
    <text evidence="1">Catalyzes the release of premature peptidyl moieties from peptidyl-tRNA molecules trapped in stalled 50S ribosomal subunits, and thus maintains levels of free tRNAs and 50S ribosomes.</text>
</comment>
<comment type="catalytic activity">
    <reaction evidence="1">
        <text>an N-acyl-L-alpha-aminoacyl-tRNA + H2O = an N-acyl-L-amino acid + a tRNA + H(+)</text>
        <dbReference type="Rhea" id="RHEA:54448"/>
        <dbReference type="Rhea" id="RHEA-COMP:10123"/>
        <dbReference type="Rhea" id="RHEA-COMP:13883"/>
        <dbReference type="ChEBI" id="CHEBI:15377"/>
        <dbReference type="ChEBI" id="CHEBI:15378"/>
        <dbReference type="ChEBI" id="CHEBI:59874"/>
        <dbReference type="ChEBI" id="CHEBI:78442"/>
        <dbReference type="ChEBI" id="CHEBI:138191"/>
        <dbReference type="EC" id="3.1.1.29"/>
    </reaction>
</comment>
<comment type="subunit">
    <text evidence="1">Monomer.</text>
</comment>
<comment type="subcellular location">
    <subcellularLocation>
        <location evidence="1">Cytoplasm</location>
    </subcellularLocation>
</comment>
<comment type="similarity">
    <text evidence="1">Belongs to the PTH family.</text>
</comment>
<protein>
    <recommendedName>
        <fullName evidence="1">Peptidyl-tRNA hydrolase</fullName>
        <shortName evidence="1">Pth</shortName>
        <ecNumber evidence="1">3.1.1.29</ecNumber>
    </recommendedName>
</protein>
<reference key="1">
    <citation type="journal article" date="2005" name="J. Bacteriol.">
        <title>Genomic sequence of an otitis media isolate of nontypeable Haemophilus influenzae: comparative study with H. influenzae serotype d, strain KW20.</title>
        <authorList>
            <person name="Harrison A."/>
            <person name="Dyer D.W."/>
            <person name="Gillaspy A."/>
            <person name="Ray W.C."/>
            <person name="Mungur R."/>
            <person name="Carson M.B."/>
            <person name="Zhong H."/>
            <person name="Gipson J."/>
            <person name="Gipson M."/>
            <person name="Johnson L.S."/>
            <person name="Lewis L."/>
            <person name="Bakaletz L.O."/>
            <person name="Munson R.S. Jr."/>
        </authorList>
    </citation>
    <scope>NUCLEOTIDE SEQUENCE [LARGE SCALE GENOMIC DNA]</scope>
    <source>
        <strain>86-028NP</strain>
    </source>
</reference>
<proteinExistence type="inferred from homology"/>
<sequence>MSEIKLIVGLGNPGEKYADTRHNAGEWLIERLARRFNVSLNPESKFFGKTARTLVNGKEVRLLVPTTFMNLSGKAVGALASFYRIKPEEILVIHDELDLPAGTAKLKQGGGHGGHNGLKDIVAQLGNNNNFYRLRIGIGHPGHRDLVAGYVLNKPSPADRDALEKVLDEATDCVEIIFKDGMIKATNRLNSFKI</sequence>
<evidence type="ECO:0000255" key="1">
    <source>
        <dbReference type="HAMAP-Rule" id="MF_00083"/>
    </source>
</evidence>